<protein>
    <recommendedName>
        <fullName>Solute carrier family 12 member 7</fullName>
    </recommendedName>
    <alternativeName>
        <fullName>Electroneutral potassium-chloride cotransporter 4</fullName>
    </alternativeName>
    <alternativeName>
        <fullName evidence="9">K-Cl cotransporter 4</fullName>
    </alternativeName>
</protein>
<proteinExistence type="evidence at protein level"/>
<evidence type="ECO:0000250" key="1"/>
<evidence type="ECO:0000250" key="2">
    <source>
        <dbReference type="UniProtKB" id="Q9WVL3"/>
    </source>
</evidence>
<evidence type="ECO:0000255" key="3"/>
<evidence type="ECO:0000256" key="4">
    <source>
        <dbReference type="SAM" id="MobiDB-lite"/>
    </source>
</evidence>
<evidence type="ECO:0000269" key="5">
    <source>
    </source>
</evidence>
<evidence type="ECO:0000269" key="6">
    <source>
    </source>
</evidence>
<evidence type="ECO:0000269" key="7">
    <source>
    </source>
</evidence>
<evidence type="ECO:0000269" key="8">
    <source>
    </source>
</evidence>
<evidence type="ECO:0000303" key="9">
    <source>
    </source>
</evidence>
<evidence type="ECO:0000303" key="10">
    <source>
    </source>
</evidence>
<evidence type="ECO:0000303" key="11">
    <source>
    </source>
</evidence>
<evidence type="ECO:0000305" key="12"/>
<evidence type="ECO:0000312" key="13">
    <source>
        <dbReference type="HGNC" id="HGNC:10915"/>
    </source>
</evidence>
<evidence type="ECO:0007744" key="14">
    <source>
        <dbReference type="PDB" id="7D99"/>
    </source>
</evidence>
<evidence type="ECO:0007744" key="15">
    <source>
    </source>
</evidence>
<evidence type="ECO:0007744" key="16">
    <source>
    </source>
</evidence>
<evidence type="ECO:0007829" key="17">
    <source>
        <dbReference type="PDB" id="7D99"/>
    </source>
</evidence>
<name>S12A7_HUMAN</name>
<dbReference type="EMBL" id="AF105365">
    <property type="protein sequence ID" value="AAD39741.1"/>
    <property type="molecule type" value="mRNA"/>
</dbReference>
<dbReference type="EMBL" id="AC116351">
    <property type="status" value="NOT_ANNOTATED_CDS"/>
    <property type="molecule type" value="Genomic_DNA"/>
</dbReference>
<dbReference type="EMBL" id="BC007760">
    <property type="protein sequence ID" value="AAH07760.1"/>
    <property type="molecule type" value="mRNA"/>
</dbReference>
<dbReference type="EMBL" id="BC098390">
    <property type="protein sequence ID" value="AAH98390.1"/>
    <property type="molecule type" value="mRNA"/>
</dbReference>
<dbReference type="EMBL" id="AK024493">
    <property type="protein sequence ID" value="BAB15783.1"/>
    <property type="molecule type" value="mRNA"/>
</dbReference>
<dbReference type="EMBL" id="AK024497">
    <property type="protein sequence ID" value="BAB15787.1"/>
    <property type="molecule type" value="mRNA"/>
</dbReference>
<dbReference type="EMBL" id="AL117433">
    <property type="protein sequence ID" value="CAB55921.1"/>
    <property type="molecule type" value="mRNA"/>
</dbReference>
<dbReference type="CCDS" id="CCDS34129.1">
    <molecule id="Q9Y666-1"/>
</dbReference>
<dbReference type="PIR" id="T17231">
    <property type="entry name" value="T17231"/>
</dbReference>
<dbReference type="RefSeq" id="NP_006589.2">
    <molecule id="Q9Y666-1"/>
    <property type="nucleotide sequence ID" value="NM_006598.3"/>
</dbReference>
<dbReference type="PDB" id="7D99">
    <property type="method" value="EM"/>
    <property type="resolution" value="2.90 A"/>
    <property type="chains" value="A/B=1-1083"/>
</dbReference>
<dbReference type="PDBsum" id="7D99"/>
<dbReference type="EMDB" id="EMD-30617"/>
<dbReference type="SMR" id="Q9Y666"/>
<dbReference type="BioGRID" id="115947">
    <property type="interactions" value="160"/>
</dbReference>
<dbReference type="FunCoup" id="Q9Y666">
    <property type="interactions" value="674"/>
</dbReference>
<dbReference type="IntAct" id="Q9Y666">
    <property type="interactions" value="80"/>
</dbReference>
<dbReference type="MINT" id="Q9Y666"/>
<dbReference type="STRING" id="9606.ENSP00000264930"/>
<dbReference type="DrugBank" id="DB00761">
    <property type="generic name" value="Potassium chloride"/>
</dbReference>
<dbReference type="TCDB" id="2.A.30.1.16">
    <property type="family name" value="the cation-chloride cotransporter (ccc) family"/>
</dbReference>
<dbReference type="GlyConnect" id="1763">
    <property type="glycosylation" value="1 N-Linked glycan (1 site)"/>
</dbReference>
<dbReference type="GlyCosmos" id="Q9Y666">
    <property type="glycosylation" value="2 sites, 1 glycan"/>
</dbReference>
<dbReference type="GlyGen" id="Q9Y666">
    <property type="glycosylation" value="5 sites, 6 N-linked glycans (2 sites), 1 O-linked glycan (1 site)"/>
</dbReference>
<dbReference type="iPTMnet" id="Q9Y666"/>
<dbReference type="PhosphoSitePlus" id="Q9Y666"/>
<dbReference type="SwissPalm" id="Q9Y666"/>
<dbReference type="BioMuta" id="SLC12A7"/>
<dbReference type="DMDM" id="166202480"/>
<dbReference type="jPOST" id="Q9Y666"/>
<dbReference type="MassIVE" id="Q9Y666"/>
<dbReference type="PaxDb" id="9606-ENSP00000264930"/>
<dbReference type="PeptideAtlas" id="Q9Y666"/>
<dbReference type="ProteomicsDB" id="86608">
    <molecule id="Q9Y666-1"/>
</dbReference>
<dbReference type="ProteomicsDB" id="86609">
    <molecule id="Q9Y666-2"/>
</dbReference>
<dbReference type="Pumba" id="Q9Y666"/>
<dbReference type="Antibodypedia" id="22300">
    <property type="antibodies" value="224 antibodies from 30 providers"/>
</dbReference>
<dbReference type="DNASU" id="10723"/>
<dbReference type="Ensembl" id="ENST00000264930.10">
    <molecule id="Q9Y666-1"/>
    <property type="protein sequence ID" value="ENSP00000264930.5"/>
    <property type="gene ID" value="ENSG00000113504.21"/>
</dbReference>
<dbReference type="GeneID" id="10723"/>
<dbReference type="KEGG" id="hsa:10723"/>
<dbReference type="MANE-Select" id="ENST00000264930.10">
    <property type="protein sequence ID" value="ENSP00000264930.5"/>
    <property type="RefSeq nucleotide sequence ID" value="NM_006598.3"/>
    <property type="RefSeq protein sequence ID" value="NP_006589.2"/>
</dbReference>
<dbReference type="UCSC" id="uc003jbu.4">
    <molecule id="Q9Y666-1"/>
    <property type="organism name" value="human"/>
</dbReference>
<dbReference type="AGR" id="HGNC:10915"/>
<dbReference type="CTD" id="10723"/>
<dbReference type="DisGeNET" id="10723"/>
<dbReference type="GeneCards" id="SLC12A7"/>
<dbReference type="HGNC" id="HGNC:10915">
    <property type="gene designation" value="SLC12A7"/>
</dbReference>
<dbReference type="HPA" id="ENSG00000113504">
    <property type="expression patterns" value="Tissue enhanced (heart)"/>
</dbReference>
<dbReference type="MIM" id="604879">
    <property type="type" value="gene"/>
</dbReference>
<dbReference type="neXtProt" id="NX_Q9Y666"/>
<dbReference type="OpenTargets" id="ENSG00000113504"/>
<dbReference type="PharmGKB" id="PA35809"/>
<dbReference type="VEuPathDB" id="HostDB:ENSG00000113504"/>
<dbReference type="eggNOG" id="KOG2082">
    <property type="taxonomic scope" value="Eukaryota"/>
</dbReference>
<dbReference type="GeneTree" id="ENSGT00940000157657"/>
<dbReference type="HOGENOM" id="CLU_001883_1_2_1"/>
<dbReference type="InParanoid" id="Q9Y666"/>
<dbReference type="OMA" id="ICEMGIL"/>
<dbReference type="OrthoDB" id="2020542at2759"/>
<dbReference type="PAN-GO" id="Q9Y666">
    <property type="GO annotations" value="8 GO annotations based on evolutionary models"/>
</dbReference>
<dbReference type="PhylomeDB" id="Q9Y666"/>
<dbReference type="TreeFam" id="TF313657"/>
<dbReference type="PathwayCommons" id="Q9Y666"/>
<dbReference type="Reactome" id="R-HSA-426117">
    <property type="pathway name" value="Cation-coupled Chloride cotransporters"/>
</dbReference>
<dbReference type="SignaLink" id="Q9Y666"/>
<dbReference type="SIGNOR" id="Q9Y666"/>
<dbReference type="BioGRID-ORCS" id="10723">
    <property type="hits" value="29 hits in 1154 CRISPR screens"/>
</dbReference>
<dbReference type="ChiTaRS" id="SLC12A7">
    <property type="organism name" value="human"/>
</dbReference>
<dbReference type="GeneWiki" id="SLC12A7"/>
<dbReference type="GenomeRNAi" id="10723"/>
<dbReference type="Pharos" id="Q9Y666">
    <property type="development level" value="Tbio"/>
</dbReference>
<dbReference type="PRO" id="PR:Q9Y666"/>
<dbReference type="Proteomes" id="UP000005640">
    <property type="component" value="Chromosome 5"/>
</dbReference>
<dbReference type="RNAct" id="Q9Y666">
    <property type="molecule type" value="protein"/>
</dbReference>
<dbReference type="Bgee" id="ENSG00000113504">
    <property type="expression patterns" value="Expressed in apex of heart and 96 other cell types or tissues"/>
</dbReference>
<dbReference type="ExpressionAtlas" id="Q9Y666">
    <property type="expression patterns" value="baseline and differential"/>
</dbReference>
<dbReference type="GO" id="GO:0005886">
    <property type="term" value="C:plasma membrane"/>
    <property type="evidence" value="ECO:0000318"/>
    <property type="project" value="GO_Central"/>
</dbReference>
<dbReference type="GO" id="GO:0032991">
    <property type="term" value="C:protein-containing complex"/>
    <property type="evidence" value="ECO:0000314"/>
    <property type="project" value="MGI"/>
</dbReference>
<dbReference type="GO" id="GO:0045202">
    <property type="term" value="C:synapse"/>
    <property type="evidence" value="ECO:0007669"/>
    <property type="project" value="GOC"/>
</dbReference>
<dbReference type="GO" id="GO:0015379">
    <property type="term" value="F:potassium:chloride symporter activity"/>
    <property type="evidence" value="ECO:0000250"/>
    <property type="project" value="UniProtKB"/>
</dbReference>
<dbReference type="GO" id="GO:0019901">
    <property type="term" value="F:protein kinase binding"/>
    <property type="evidence" value="ECO:0000353"/>
    <property type="project" value="ParkinsonsUK-UCL"/>
</dbReference>
<dbReference type="GO" id="GO:0006884">
    <property type="term" value="P:cell volume homeostasis"/>
    <property type="evidence" value="ECO:0000318"/>
    <property type="project" value="GO_Central"/>
</dbReference>
<dbReference type="GO" id="GO:0071333">
    <property type="term" value="P:cellular response to glucose stimulus"/>
    <property type="evidence" value="ECO:0007669"/>
    <property type="project" value="Ensembl"/>
</dbReference>
<dbReference type="GO" id="GO:0007268">
    <property type="term" value="P:chemical synaptic transmission"/>
    <property type="evidence" value="ECO:0000318"/>
    <property type="project" value="GO_Central"/>
</dbReference>
<dbReference type="GO" id="GO:0055064">
    <property type="term" value="P:chloride ion homeostasis"/>
    <property type="evidence" value="ECO:0000318"/>
    <property type="project" value="GO_Central"/>
</dbReference>
<dbReference type="GO" id="GO:1902476">
    <property type="term" value="P:chloride transmembrane transport"/>
    <property type="evidence" value="ECO:0000318"/>
    <property type="project" value="GO_Central"/>
</dbReference>
<dbReference type="GO" id="GO:0006811">
    <property type="term" value="P:monoatomic ion transport"/>
    <property type="evidence" value="ECO:0000304"/>
    <property type="project" value="Reactome"/>
</dbReference>
<dbReference type="GO" id="GO:0055075">
    <property type="term" value="P:potassium ion homeostasis"/>
    <property type="evidence" value="ECO:0000318"/>
    <property type="project" value="GO_Central"/>
</dbReference>
<dbReference type="GO" id="GO:1990573">
    <property type="term" value="P:potassium ion import across plasma membrane"/>
    <property type="evidence" value="ECO:0000250"/>
    <property type="project" value="ARUK-UCL"/>
</dbReference>
<dbReference type="GO" id="GO:0071805">
    <property type="term" value="P:potassium ion transmembrane transport"/>
    <property type="evidence" value="ECO:0000250"/>
    <property type="project" value="UniProtKB"/>
</dbReference>
<dbReference type="FunFam" id="1.20.1740.10:FF:000049">
    <property type="entry name" value="Solute carrier family 12 (potassium/chloride transporter), member 4"/>
    <property type="match status" value="1"/>
</dbReference>
<dbReference type="FunFam" id="1.20.1740.10:FF:000040">
    <property type="entry name" value="Solute carrier family 12 member 6"/>
    <property type="match status" value="1"/>
</dbReference>
<dbReference type="Gene3D" id="1.20.1740.10">
    <property type="entry name" value="Amino acid/polyamine transporter I"/>
    <property type="match status" value="1"/>
</dbReference>
<dbReference type="InterPro" id="IPR004841">
    <property type="entry name" value="AA-permease/SLC12A_dom"/>
</dbReference>
<dbReference type="InterPro" id="IPR000076">
    <property type="entry name" value="KCL_cotranspt"/>
</dbReference>
<dbReference type="InterPro" id="IPR018491">
    <property type="entry name" value="SLC12_C"/>
</dbReference>
<dbReference type="InterPro" id="IPR004842">
    <property type="entry name" value="SLC12A_fam"/>
</dbReference>
<dbReference type="NCBIfam" id="TIGR00930">
    <property type="entry name" value="2a30"/>
    <property type="match status" value="1"/>
</dbReference>
<dbReference type="PANTHER" id="PTHR11827:SF47">
    <property type="entry name" value="SOLUTE CARRIER FAMILY 12 MEMBER 7"/>
    <property type="match status" value="1"/>
</dbReference>
<dbReference type="PANTHER" id="PTHR11827">
    <property type="entry name" value="SOLUTE CARRIER FAMILY 12, CATION COTRANSPORTERS"/>
    <property type="match status" value="1"/>
</dbReference>
<dbReference type="Pfam" id="PF00324">
    <property type="entry name" value="AA_permease"/>
    <property type="match status" value="2"/>
</dbReference>
<dbReference type="Pfam" id="PF03522">
    <property type="entry name" value="SLC12"/>
    <property type="match status" value="2"/>
</dbReference>
<dbReference type="PRINTS" id="PR01081">
    <property type="entry name" value="KCLTRNSPORT"/>
</dbReference>
<feature type="chain" id="PRO_0000178039" description="Solute carrier family 12 member 7">
    <location>
        <begin position="1"/>
        <end position="1083"/>
    </location>
</feature>
<feature type="topological domain" description="Cytoplasmic" evidence="8 14">
    <location>
        <begin position="1"/>
        <end position="119"/>
    </location>
</feature>
<feature type="transmembrane region" description="Discontinuously helical; Name=1" evidence="8 14">
    <location>
        <begin position="120"/>
        <end position="142"/>
    </location>
</feature>
<feature type="topological domain" description="Extracellular" evidence="8 14">
    <location>
        <begin position="143"/>
        <end position="149"/>
    </location>
</feature>
<feature type="transmembrane region" description="Helical; Name=2" evidence="8 14">
    <location>
        <begin position="150"/>
        <end position="172"/>
    </location>
</feature>
<feature type="topological domain" description="Cytoplasmic" evidence="8 14">
    <location>
        <begin position="173"/>
        <end position="196"/>
    </location>
</feature>
<feature type="transmembrane region" description="Helical; Name=3" evidence="8 14">
    <location>
        <begin position="197"/>
        <end position="225"/>
    </location>
</feature>
<feature type="topological domain" description="Extracellular" evidence="8 14">
    <location>
        <begin position="226"/>
        <end position="249"/>
    </location>
</feature>
<feature type="transmembrane region" description="Helical; Name=4" evidence="8 14">
    <location>
        <begin position="250"/>
        <end position="270"/>
    </location>
</feature>
<feature type="transmembrane region" description="Helical; Name=5" evidence="8 14">
    <location>
        <begin position="272"/>
        <end position="300"/>
    </location>
</feature>
<feature type="topological domain" description="Extracellular" evidence="8 14">
    <location>
        <begin position="301"/>
        <end position="419"/>
    </location>
</feature>
<feature type="transmembrane region" description="Helical; Name=6" evidence="8 14">
    <location>
        <begin position="420"/>
        <end position="440"/>
    </location>
</feature>
<feature type="topological domain" description="Cytoplasmic" evidence="8 14">
    <location>
        <begin position="441"/>
        <end position="450"/>
    </location>
</feature>
<feature type="transmembrane region" description="Helical; Name=7" evidence="8 14">
    <location>
        <begin position="451"/>
        <end position="473"/>
    </location>
</feature>
<feature type="topological domain" description="Extracellular" evidence="8 14">
    <location>
        <begin position="474"/>
        <end position="504"/>
    </location>
</feature>
<feature type="transmembrane region" description="Helical; Name=8" evidence="8 14">
    <location>
        <begin position="505"/>
        <end position="531"/>
    </location>
</feature>
<feature type="topological domain" description="Cytoplasmic" evidence="8 14">
    <location>
        <begin position="532"/>
        <end position="554"/>
    </location>
</feature>
<feature type="transmembrane region" description="Helical; Name=9" evidence="8 14">
    <location>
        <begin position="555"/>
        <end position="571"/>
    </location>
</feature>
<feature type="transmembrane region" description="Helical; Name=10" evidence="8 14">
    <location>
        <begin position="574"/>
        <end position="598"/>
    </location>
</feature>
<feature type="topological domain" description="Cytoplasmic" evidence="8 14">
    <location>
        <begin position="599"/>
        <end position="612"/>
    </location>
</feature>
<feature type="transmembrane region" description="Helical; Name=11" evidence="8 14">
    <location>
        <begin position="613"/>
        <end position="632"/>
    </location>
</feature>
<feature type="transmembrane region" description="Helical; Name=12" evidence="8 14">
    <location>
        <begin position="636"/>
        <end position="651"/>
    </location>
</feature>
<feature type="topological domain" description="Cytoplasmic" evidence="8 14">
    <location>
        <begin position="652"/>
        <end position="1083"/>
    </location>
</feature>
<feature type="region of interest" description="Disordered" evidence="4">
    <location>
        <begin position="1"/>
        <end position="52"/>
    </location>
</feature>
<feature type="region of interest" description="Scissor helix" evidence="8 14">
    <location>
        <begin position="664"/>
        <end position="680"/>
    </location>
</feature>
<feature type="compositionally biased region" description="Basic and acidic residues" evidence="4">
    <location>
        <begin position="12"/>
        <end position="26"/>
    </location>
</feature>
<feature type="binding site" evidence="8 14">
    <location>
        <position position="131"/>
    </location>
    <ligand>
        <name>K(+)</name>
        <dbReference type="ChEBI" id="CHEBI:29103"/>
    </ligand>
</feature>
<feature type="binding site" evidence="8 14">
    <location>
        <position position="132"/>
    </location>
    <ligand>
        <name>K(+)</name>
        <dbReference type="ChEBI" id="CHEBI:29103"/>
    </ligand>
</feature>
<feature type="binding site" evidence="8 14">
    <location>
        <position position="135"/>
    </location>
    <ligand>
        <name>chloride</name>
        <dbReference type="ChEBI" id="CHEBI:17996"/>
        <label>2</label>
    </ligand>
</feature>
<feature type="binding site" evidence="8 14">
    <location>
        <position position="429"/>
    </location>
    <ligand>
        <name>chloride</name>
        <dbReference type="ChEBI" id="CHEBI:17996"/>
        <label>2</label>
    </ligand>
</feature>
<feature type="binding site" evidence="8 14">
    <location>
        <position position="429"/>
    </location>
    <ligand>
        <name>K(+)</name>
        <dbReference type="ChEBI" id="CHEBI:29103"/>
    </ligand>
</feature>
<feature type="binding site" evidence="8 14">
    <location>
        <position position="432"/>
    </location>
    <ligand>
        <name>K(+)</name>
        <dbReference type="ChEBI" id="CHEBI:29103"/>
    </ligand>
</feature>
<feature type="binding site" evidence="8 14">
    <location>
        <position position="433"/>
    </location>
    <ligand>
        <name>chloride</name>
        <dbReference type="ChEBI" id="CHEBI:17996"/>
        <label>1</label>
    </ligand>
</feature>
<feature type="binding site" evidence="8 14">
    <location>
        <position position="434"/>
    </location>
    <ligand>
        <name>chloride</name>
        <dbReference type="ChEBI" id="CHEBI:17996"/>
        <label>1</label>
    </ligand>
</feature>
<feature type="binding site" evidence="8 14">
    <location>
        <position position="589"/>
    </location>
    <ligand>
        <name>chloride</name>
        <dbReference type="ChEBI" id="CHEBI:17996"/>
        <label>1</label>
    </ligand>
</feature>
<feature type="modified residue" description="Phosphothreonine" evidence="16">
    <location>
        <position position="30"/>
    </location>
</feature>
<feature type="modified residue" description="Phosphoserine" evidence="15">
    <location>
        <position position="50"/>
    </location>
</feature>
<feature type="modified residue" description="Phosphoserine" evidence="15">
    <location>
        <position position="62"/>
    </location>
</feature>
<feature type="modified residue" description="Phosphothreonine" evidence="2">
    <location>
        <position position="973"/>
    </location>
</feature>
<feature type="modified residue" description="Phosphothreonine" evidence="2">
    <location>
        <position position="980"/>
    </location>
</feature>
<feature type="glycosylation site" description="N-linked (GlcNAc...) asparagine" evidence="3">
    <location>
        <position position="312"/>
    </location>
</feature>
<feature type="glycosylation site" description="N-linked (GlcNAc...) asparagine" evidence="3">
    <location>
        <position position="360"/>
    </location>
</feature>
<feature type="disulfide bond" evidence="14">
    <location>
        <begin position="308"/>
        <end position="323"/>
    </location>
</feature>
<feature type="disulfide bond" evidence="14">
    <location>
        <begin position="343"/>
        <end position="352"/>
    </location>
</feature>
<feature type="splice variant" id="VSP_006119" description="In isoform 2." evidence="11">
    <original>YISPGAAIFQAEAAGGEAAAMLHNMRVYGTCTLVLMALVV</original>
    <variation>GTEDGVGSLGLGLAQGNRRQTHLSPSDAAQAAHGASYGSF</variation>
    <location>
        <begin position="227"/>
        <end position="266"/>
    </location>
</feature>
<feature type="splice variant" id="VSP_006120" description="In isoform 2." evidence="11">
    <location>
        <begin position="267"/>
        <end position="1083"/>
    </location>
</feature>
<feature type="sequence variant" id="VAR_028748" description="In dbSNP:rs4526148." evidence="5">
    <original>A</original>
    <variation>T</variation>
    <location>
        <position position="408"/>
    </location>
</feature>
<feature type="sequence conflict" description="In Ref. 1; AAD39741." evidence="12" ref="1">
    <original>S</original>
    <variation>T</variation>
    <location>
        <position position="522"/>
    </location>
</feature>
<feature type="helix" evidence="17">
    <location>
        <begin position="86"/>
        <end position="89"/>
    </location>
</feature>
<feature type="helix" evidence="17">
    <location>
        <begin position="100"/>
        <end position="103"/>
    </location>
</feature>
<feature type="helix" evidence="17">
    <location>
        <begin position="120"/>
        <end position="123"/>
    </location>
</feature>
<feature type="helix" evidence="17">
    <location>
        <begin position="125"/>
        <end position="130"/>
    </location>
</feature>
<feature type="helix" evidence="17">
    <location>
        <begin position="136"/>
        <end position="139"/>
    </location>
</feature>
<feature type="helix" evidence="17">
    <location>
        <begin position="141"/>
        <end position="163"/>
    </location>
</feature>
<feature type="helix" evidence="17">
    <location>
        <begin position="165"/>
        <end position="176"/>
    </location>
</feature>
<feature type="helix" evidence="17">
    <location>
        <begin position="186"/>
        <end position="190"/>
    </location>
</feature>
<feature type="helix" evidence="17">
    <location>
        <begin position="194"/>
        <end position="227"/>
    </location>
</feature>
<feature type="helix" evidence="17">
    <location>
        <begin position="240"/>
        <end position="242"/>
    </location>
</feature>
<feature type="helix" evidence="17">
    <location>
        <begin position="243"/>
        <end position="268"/>
    </location>
</feature>
<feature type="helix" evidence="17">
    <location>
        <begin position="270"/>
        <end position="275"/>
    </location>
</feature>
<feature type="helix" evidence="17">
    <location>
        <begin position="277"/>
        <end position="300"/>
    </location>
</feature>
<feature type="strand" evidence="17">
    <location>
        <begin position="306"/>
        <end position="310"/>
    </location>
</feature>
<feature type="strand" evidence="17">
    <location>
        <begin position="325"/>
        <end position="329"/>
    </location>
</feature>
<feature type="strand" evidence="17">
    <location>
        <begin position="332"/>
        <end position="335"/>
    </location>
</feature>
<feature type="helix" evidence="17">
    <location>
        <begin position="337"/>
        <end position="342"/>
    </location>
</feature>
<feature type="strand" evidence="17">
    <location>
        <begin position="343"/>
        <end position="347"/>
    </location>
</feature>
<feature type="helix" evidence="17">
    <location>
        <begin position="354"/>
        <end position="358"/>
    </location>
</feature>
<feature type="strand" evidence="17">
    <location>
        <begin position="361"/>
        <end position="366"/>
    </location>
</feature>
<feature type="strand" evidence="17">
    <location>
        <begin position="370"/>
        <end position="372"/>
    </location>
</feature>
<feature type="turn" evidence="17">
    <location>
        <begin position="375"/>
        <end position="379"/>
    </location>
</feature>
<feature type="strand" evidence="17">
    <location>
        <begin position="393"/>
        <end position="395"/>
    </location>
</feature>
<feature type="turn" evidence="17">
    <location>
        <begin position="406"/>
        <end position="408"/>
    </location>
</feature>
<feature type="helix" evidence="17">
    <location>
        <begin position="420"/>
        <end position="427"/>
    </location>
</feature>
<feature type="helix" evidence="17">
    <location>
        <begin position="428"/>
        <end position="430"/>
    </location>
</feature>
<feature type="helix" evidence="17">
    <location>
        <begin position="434"/>
        <end position="438"/>
    </location>
</feature>
<feature type="turn" evidence="17">
    <location>
        <begin position="439"/>
        <end position="442"/>
    </location>
</feature>
<feature type="strand" evidence="17">
    <location>
        <begin position="443"/>
        <end position="445"/>
    </location>
</feature>
<feature type="helix" evidence="17">
    <location>
        <begin position="447"/>
        <end position="474"/>
    </location>
</feature>
<feature type="helix" evidence="17">
    <location>
        <begin position="479"/>
        <end position="482"/>
    </location>
</feature>
<feature type="helix" evidence="17">
    <location>
        <begin position="485"/>
        <end position="487"/>
    </location>
</feature>
<feature type="turn" evidence="17">
    <location>
        <begin position="488"/>
        <end position="491"/>
    </location>
</feature>
<feature type="helix" evidence="17">
    <location>
        <begin position="495"/>
        <end position="499"/>
    </location>
</feature>
<feature type="strand" evidence="17">
    <location>
        <begin position="500"/>
        <end position="502"/>
    </location>
</feature>
<feature type="helix" evidence="17">
    <location>
        <begin position="505"/>
        <end position="524"/>
    </location>
</feature>
<feature type="helix" evidence="17">
    <location>
        <begin position="526"/>
        <end position="536"/>
    </location>
</feature>
<feature type="strand" evidence="17">
    <location>
        <begin position="538"/>
        <end position="540"/>
    </location>
</feature>
<feature type="helix" evidence="17">
    <location>
        <begin position="544"/>
        <end position="546"/>
    </location>
</feature>
<feature type="helix" evidence="17">
    <location>
        <begin position="556"/>
        <end position="569"/>
    </location>
</feature>
<feature type="helix" evidence="17">
    <location>
        <begin position="574"/>
        <end position="601"/>
    </location>
</feature>
<feature type="helix" evidence="17">
    <location>
        <begin position="616"/>
        <end position="633"/>
    </location>
</feature>
<feature type="helix" evidence="17">
    <location>
        <begin position="635"/>
        <end position="658"/>
    </location>
</feature>
<feature type="strand" evidence="17">
    <location>
        <begin position="661"/>
        <end position="663"/>
    </location>
</feature>
<feature type="helix" evidence="17">
    <location>
        <begin position="664"/>
        <end position="680"/>
    </location>
</feature>
<feature type="strand" evidence="17">
    <location>
        <begin position="694"/>
        <end position="698"/>
    </location>
</feature>
<feature type="helix" evidence="17">
    <location>
        <begin position="710"/>
        <end position="718"/>
    </location>
</feature>
<feature type="strand" evidence="17">
    <location>
        <begin position="725"/>
        <end position="733"/>
    </location>
</feature>
<feature type="turn" evidence="17">
    <location>
        <begin position="735"/>
        <end position="737"/>
    </location>
</feature>
<feature type="helix" evidence="17">
    <location>
        <begin position="741"/>
        <end position="755"/>
    </location>
</feature>
<feature type="strand" evidence="17">
    <location>
        <begin position="761"/>
        <end position="769"/>
    </location>
</feature>
<feature type="helix" evidence="17">
    <location>
        <begin position="770"/>
        <end position="780"/>
    </location>
</feature>
<feature type="strand" evidence="17">
    <location>
        <begin position="790"/>
        <end position="794"/>
    </location>
</feature>
<feature type="helix" evidence="17">
    <location>
        <begin position="804"/>
        <end position="820"/>
    </location>
</feature>
<feature type="strand" evidence="17">
    <location>
        <begin position="824"/>
        <end position="830"/>
    </location>
</feature>
<feature type="helix" evidence="17">
    <location>
        <begin position="831"/>
        <end position="833"/>
    </location>
</feature>
<feature type="strand" evidence="17">
    <location>
        <begin position="845"/>
        <end position="849"/>
    </location>
</feature>
<feature type="helix" evidence="17">
    <location>
        <begin position="855"/>
        <end position="865"/>
    </location>
</feature>
<feature type="strand" evidence="17">
    <location>
        <begin position="868"/>
        <end position="873"/>
    </location>
</feature>
<feature type="strand" evidence="17">
    <location>
        <begin position="875"/>
        <end position="881"/>
    </location>
</feature>
<feature type="helix" evidence="17">
    <location>
        <begin position="888"/>
        <end position="895"/>
    </location>
</feature>
<feature type="helix" evidence="17">
    <location>
        <begin position="897"/>
        <end position="901"/>
    </location>
</feature>
<feature type="strand" evidence="17">
    <location>
        <begin position="906"/>
        <end position="911"/>
    </location>
</feature>
<feature type="helix" evidence="17">
    <location>
        <begin position="1012"/>
        <end position="1030"/>
    </location>
</feature>
<feature type="strand" evidence="17">
    <location>
        <begin position="1035"/>
        <end position="1040"/>
    </location>
</feature>
<feature type="strand" evidence="17">
    <location>
        <begin position="1046"/>
        <end position="1048"/>
    </location>
</feature>
<feature type="helix" evidence="17">
    <location>
        <begin position="1051"/>
        <end position="1061"/>
    </location>
</feature>
<feature type="strand" evidence="17">
    <location>
        <begin position="1068"/>
        <end position="1072"/>
    </location>
</feature>
<gene>
    <name evidence="13" type="primary">SLC12A7</name>
    <name evidence="10" type="synonym">KCC4</name>
</gene>
<sequence>MPTNFTVVPVEAHADGGGDETAERTEAPGTPEGPEPERPSPGDGNPRENSPFLNNVEVEQESFFEGKNMALFEEEMDSNPMVSSLLNKLANYTNLSQGVVEHEEDEESRRREAKAPRMGTFIGVYLPCLQNILGVILFLRLTWIVGVAGVLESFLIVAMCCTCTMLTAISMSAIATNGVVPAGGSYYMISRSLGPEFGGAVGLCFYLGTTFAGAMYILGTIEIFLTYISPGAAIFQAEAAGGEAAAMLHNMRVYGTCTLVLMALVVFVGVKYVNKLALVFLACVVLSILAIYAGVIKSAFDPPDIPVCLLGNRTLSRRSFDACVKAYGIHNNSATSALWGLFCNGSQPSAACDEYFIQNNVTEIQGIPGAASGVFLENLWSTYAHAGAFVEKKGVPSVPVAEESRASALPYVLTDIAASFTLLVGIYFPSVTGIMAGSNRSGDLKDAQKSIPTGTILAIVTTSFIYLSCIVLFGACIEGVVLRDKFGEALQGNLVIGMLAWPSPWVIVIGSFFSTCGAGLQSLTGAPRLLQAIARDGIVPFLQVFGHGKANGEPTWALLLTVLICETGILIASLDSVAPILSMFFLMCYLFVNLACAVQTLLRTPNWRPRFKFYHWTLSFLGMSLCLALMFICSWYYALSAMLIAGCIYKYIEYRGAEKEWGDGIRGLSLNAARYALLRVEHGPPHTKNWRPQVLVMLNLDAEQAVKHPRLLSFTSQLKAGKGLTIVGSVLEGTYLDKHMEAQRAEENIRSLMSTEKTKGFCQLVVSSSLRDGMSHLIQSAGLGGLKHNTVLMAWPASWKQEDNPFSWKNFVDTVRDTTAAHQALLVAKNVDSFPQNQERFGGGHIDVWWIVHDGGMLMLLPFLLRQHKVWRKCRMRIFTVAQVDDNSIQMKKDLQMFLYHLRISAEVEVVEMVENDISAFTYERTLMMEQRSQMLKQMQLSKNEQEREAQLIHDRNTASHTAAAARTQAPPTPDKVQMTWTREKLIAEKYRSRDTSLSGFKDLFSMKPDQSNVRRMHTAVKLNGVVLNKSQDAQLVLLNMPGPPKNRQGDENYMEFLEVLTEGLNRVLLVRGGGREVITIYS</sequence>
<keyword id="KW-0002">3D-structure</keyword>
<keyword id="KW-0025">Alternative splicing</keyword>
<keyword id="KW-1003">Cell membrane</keyword>
<keyword id="KW-0868">Chloride</keyword>
<keyword id="KW-1015">Disulfide bond</keyword>
<keyword id="KW-0325">Glycoprotein</keyword>
<keyword id="KW-0406">Ion transport</keyword>
<keyword id="KW-0472">Membrane</keyword>
<keyword id="KW-0597">Phosphoprotein</keyword>
<keyword id="KW-0630">Potassium</keyword>
<keyword id="KW-0633">Potassium transport</keyword>
<keyword id="KW-1267">Proteomics identification</keyword>
<keyword id="KW-1185">Reference proteome</keyword>
<keyword id="KW-0769">Symport</keyword>
<keyword id="KW-0812">Transmembrane</keyword>
<keyword id="KW-1133">Transmembrane helix</keyword>
<keyword id="KW-0813">Transport</keyword>
<comment type="function">
    <text evidence="1 6">Mediates electroneutral potassium-chloride cotransport when activated by cell swelling (PubMed:10913127). May mediate K(+) uptake into Deiters' cells in the cochlea and contribute to K(+) recycling in the inner ear. Important for the survival of cochlear outer and inner hair cells and the maintenance of the organ of Corti. May be required for basolateral Cl(-) extrusion in the kidney and contribute to renal acidification (By similarity).</text>
</comment>
<comment type="catalytic activity">
    <reaction evidence="6">
        <text>K(+)(in) + chloride(in) = K(+)(out) + chloride(out)</text>
        <dbReference type="Rhea" id="RHEA:72427"/>
        <dbReference type="ChEBI" id="CHEBI:17996"/>
        <dbReference type="ChEBI" id="CHEBI:29103"/>
    </reaction>
</comment>
<comment type="activity regulation">
    <text evidence="7">Activated by N-ethylmaleimide (NEM). Inhibited by furosemide, DIDS and bumetanide. The inhibition is much stronger in the presence of 50 mM K(+) in the uptake medium. Inhibited by DIOA. Inhibited by WNK3.</text>
</comment>
<comment type="biophysicochemical properties">
    <kinetics>
        <KM evidence="6">17.5 mM for K(+)</KM>
    </kinetics>
</comment>
<comment type="subunit">
    <text evidence="8">Homodimer; adopts a domain-swap conformation at the scissor helices connecting the transmembrane domain and C-terminal domain (PubMed:33310850). Heterodimer with K-Cl cotransporter SLC12A5 (PubMed:33310850).</text>
</comment>
<comment type="interaction">
    <interactant intactId="EBI-12854384">
        <id>Q9Y666-2</id>
    </interactant>
    <interactant intactId="EBI-17565645">
        <id>P08034</id>
        <label>GJB1</label>
    </interactant>
    <organismsDiffer>false</organismsDiffer>
    <experiments>3</experiments>
</comment>
<comment type="interaction">
    <interactant intactId="EBI-12854384">
        <id>Q9Y666-2</id>
    </interactant>
    <interactant intactId="EBI-12808020">
        <id>Q9BZJ8</id>
        <label>GPR61</label>
    </interactant>
    <organismsDiffer>false</organismsDiffer>
    <experiments>3</experiments>
</comment>
<comment type="interaction">
    <interactant intactId="EBI-12854384">
        <id>Q9Y666-2</id>
    </interactant>
    <interactant intactId="EBI-12070086">
        <id>Q5J8X5</id>
        <label>MS4A13</label>
    </interactant>
    <organismsDiffer>false</organismsDiffer>
    <experiments>3</experiments>
</comment>
<comment type="interaction">
    <interactant intactId="EBI-12854384">
        <id>Q9Y666-2</id>
    </interactant>
    <interactant intactId="EBI-2624456">
        <id>P41143</id>
        <label>OPRD1</label>
    </interactant>
    <organismsDiffer>false</organismsDiffer>
    <experiments>3</experiments>
</comment>
<comment type="interaction">
    <interactant intactId="EBI-12854384">
        <id>Q9Y666-2</id>
    </interactant>
    <interactant intactId="EBI-12865884">
        <id>Q5XKR4</id>
        <label>OTP</label>
    </interactant>
    <organismsDiffer>false</organismsDiffer>
    <experiments>3</experiments>
</comment>
<comment type="interaction">
    <interactant intactId="EBI-12854384">
        <id>Q9Y666-2</id>
    </interactant>
    <interactant intactId="EBI-3923031">
        <id>Q14973</id>
        <label>SLC10A1</label>
    </interactant>
    <organismsDiffer>false</organismsDiffer>
    <experiments>3</experiments>
</comment>
<comment type="interaction">
    <interactant intactId="EBI-12854384">
        <id>Q9Y666-2</id>
    </interactant>
    <interactant intactId="EBI-18159983">
        <id>Q3KNW5</id>
        <label>SLC10A6</label>
    </interactant>
    <organismsDiffer>false</organismsDiffer>
    <experiments>3</experiments>
</comment>
<comment type="interaction">
    <interactant intactId="EBI-12854384">
        <id>Q9Y666-2</id>
    </interactant>
    <interactant intactId="EBI-17295964">
        <id>Q9NQQ7-3</id>
        <label>SLC35C2</label>
    </interactant>
    <organismsDiffer>false</organismsDiffer>
    <experiments>3</experiments>
</comment>
<comment type="interaction">
    <interactant intactId="EBI-12854384">
        <id>Q9Y666-2</id>
    </interactant>
    <interactant intactId="EBI-1045825">
        <id>P55061</id>
        <label>TMBIM6</label>
    </interactant>
    <organismsDiffer>false</organismsDiffer>
    <experiments>3</experiments>
</comment>
<comment type="interaction">
    <interactant intactId="EBI-12854384">
        <id>Q9Y666-2</id>
    </interactant>
    <interactant intactId="EBI-348587">
        <id>Q9BVK8</id>
        <label>TMEM147</label>
    </interactant>
    <organismsDiffer>false</organismsDiffer>
    <experiments>3</experiments>
</comment>
<comment type="interaction">
    <interactant intactId="EBI-12854384">
        <id>Q9Y666-2</id>
    </interactant>
    <interactant intactId="EBI-10982110">
        <id>Q96Q45-2</id>
        <label>TMEM237</label>
    </interactant>
    <organismsDiffer>false</organismsDiffer>
    <experiments>3</experiments>
</comment>
<comment type="interaction">
    <interactant intactId="EBI-12854384">
        <id>Q9Y666-2</id>
    </interactant>
    <interactant intactId="EBI-3922833">
        <id>Q969K7</id>
        <label>TMEM54</label>
    </interactant>
    <organismsDiffer>false</organismsDiffer>
    <experiments>3</experiments>
</comment>
<comment type="interaction">
    <interactant intactId="EBI-12854384">
        <id>Q9Y666-2</id>
    </interactant>
    <interactant intactId="EBI-751210">
        <id>Q96EC8</id>
        <label>YIPF6</label>
    </interactant>
    <organismsDiffer>false</organismsDiffer>
    <experiments>3</experiments>
</comment>
<comment type="subcellular location">
    <subcellularLocation>
        <location evidence="6">Cell membrane</location>
        <topology evidence="3">Multi-pass membrane protein</topology>
    </subcellularLocation>
</comment>
<comment type="alternative products">
    <event type="alternative splicing"/>
    <isoform>
        <id>Q9Y666-1</id>
        <name>1</name>
        <sequence type="displayed"/>
    </isoform>
    <isoform>
        <id>Q9Y666-2</id>
        <name>2</name>
        <sequence type="described" ref="VSP_006119 VSP_006120"/>
    </isoform>
</comment>
<comment type="tissue specificity">
    <text evidence="5">Detected in muscle, brain, lung, heart and kidney.</text>
</comment>
<comment type="similarity">
    <text evidence="12">Belongs to the SLC12A transporter family. K/Cl co-transporter subfamily.</text>
</comment>
<organism>
    <name type="scientific">Homo sapiens</name>
    <name type="common">Human</name>
    <dbReference type="NCBI Taxonomy" id="9606"/>
    <lineage>
        <taxon>Eukaryota</taxon>
        <taxon>Metazoa</taxon>
        <taxon>Chordata</taxon>
        <taxon>Craniata</taxon>
        <taxon>Vertebrata</taxon>
        <taxon>Euteleostomi</taxon>
        <taxon>Mammalia</taxon>
        <taxon>Eutheria</taxon>
        <taxon>Euarchontoglires</taxon>
        <taxon>Primates</taxon>
        <taxon>Haplorrhini</taxon>
        <taxon>Catarrhini</taxon>
        <taxon>Hominidae</taxon>
        <taxon>Homo</taxon>
    </lineage>
</organism>
<accession>Q9Y666</accession>
<accession>A6NDS8</accession>
<accession>Q4G0F3</accession>
<accession>Q96I81</accession>
<accession>Q9H7I3</accession>
<accession>Q9H7I7</accession>
<accession>Q9UFW2</accession>
<reference key="1">
    <citation type="journal article" date="1999" name="J. Biol. Chem.">
        <title>Cloning and characterization of KCC3 and KCC4, new members of the cation-chloride cotransporter gene family.</title>
        <authorList>
            <person name="Mount D.B."/>
            <person name="Mercado A."/>
            <person name="Song L."/>
            <person name="Xu J."/>
            <person name="George A.L. Jr."/>
            <person name="Delpire E."/>
            <person name="Gamba G."/>
        </authorList>
    </citation>
    <scope>NUCLEOTIDE SEQUENCE [MRNA] (ISOFORM 1)</scope>
    <scope>VARIANT THR-408</scope>
    <scope>TISSUE SPECIFICITY</scope>
</reference>
<reference key="2">
    <citation type="journal article" date="2004" name="Nature">
        <title>The DNA sequence and comparative analysis of human chromosome 5.</title>
        <authorList>
            <person name="Schmutz J."/>
            <person name="Martin J."/>
            <person name="Terry A."/>
            <person name="Couronne O."/>
            <person name="Grimwood J."/>
            <person name="Lowry S."/>
            <person name="Gordon L.A."/>
            <person name="Scott D."/>
            <person name="Xie G."/>
            <person name="Huang W."/>
            <person name="Hellsten U."/>
            <person name="Tran-Gyamfi M."/>
            <person name="She X."/>
            <person name="Prabhakar S."/>
            <person name="Aerts A."/>
            <person name="Altherr M."/>
            <person name="Bajorek E."/>
            <person name="Black S."/>
            <person name="Branscomb E."/>
            <person name="Caoile C."/>
            <person name="Challacombe J.F."/>
            <person name="Chan Y.M."/>
            <person name="Denys M."/>
            <person name="Detter J.C."/>
            <person name="Escobar J."/>
            <person name="Flowers D."/>
            <person name="Fotopulos D."/>
            <person name="Glavina T."/>
            <person name="Gomez M."/>
            <person name="Gonzales E."/>
            <person name="Goodstein D."/>
            <person name="Grigoriev I."/>
            <person name="Groza M."/>
            <person name="Hammon N."/>
            <person name="Hawkins T."/>
            <person name="Haydu L."/>
            <person name="Israni S."/>
            <person name="Jett J."/>
            <person name="Kadner K."/>
            <person name="Kimball H."/>
            <person name="Kobayashi A."/>
            <person name="Lopez F."/>
            <person name="Lou Y."/>
            <person name="Martinez D."/>
            <person name="Medina C."/>
            <person name="Morgan J."/>
            <person name="Nandkeshwar R."/>
            <person name="Noonan J.P."/>
            <person name="Pitluck S."/>
            <person name="Pollard M."/>
            <person name="Predki P."/>
            <person name="Priest J."/>
            <person name="Ramirez L."/>
            <person name="Retterer J."/>
            <person name="Rodriguez A."/>
            <person name="Rogers S."/>
            <person name="Salamov A."/>
            <person name="Salazar A."/>
            <person name="Thayer N."/>
            <person name="Tice H."/>
            <person name="Tsai M."/>
            <person name="Ustaszewska A."/>
            <person name="Vo N."/>
            <person name="Wheeler J."/>
            <person name="Wu K."/>
            <person name="Yang J."/>
            <person name="Dickson M."/>
            <person name="Cheng J.-F."/>
            <person name="Eichler E.E."/>
            <person name="Olsen A."/>
            <person name="Pennacchio L.A."/>
            <person name="Rokhsar D.S."/>
            <person name="Richardson P."/>
            <person name="Lucas S.M."/>
            <person name="Myers R.M."/>
            <person name="Rubin E.M."/>
        </authorList>
    </citation>
    <scope>NUCLEOTIDE SEQUENCE [LARGE SCALE GENOMIC DNA]</scope>
</reference>
<reference key="3">
    <citation type="journal article" date="2004" name="Genome Res.">
        <title>The status, quality, and expansion of the NIH full-length cDNA project: the Mammalian Gene Collection (MGC).</title>
        <authorList>
            <consortium name="The MGC Project Team"/>
        </authorList>
    </citation>
    <scope>NUCLEOTIDE SEQUENCE [LARGE SCALE MRNA] (ISOFORMS 1 AND 2)</scope>
    <source>
        <tissue>Brain</tissue>
        <tissue>Testis</tissue>
    </source>
</reference>
<reference key="4">
    <citation type="journal article" date="2000" name="DNA Res.">
        <title>Characterization of long cDNA clones from human adult spleen.</title>
        <authorList>
            <person name="Hattori A."/>
            <person name="Okumura K."/>
            <person name="Nagase T."/>
            <person name="Kikuno R."/>
            <person name="Hirosawa M."/>
            <person name="Ohara O."/>
        </authorList>
    </citation>
    <scope>NUCLEOTIDE SEQUENCE [LARGE SCALE MRNA] OF 304-1083 (ISOFORM 1)</scope>
    <source>
        <tissue>Spleen</tissue>
    </source>
</reference>
<reference key="5">
    <citation type="journal article" date="2007" name="BMC Genomics">
        <title>The full-ORF clone resource of the German cDNA consortium.</title>
        <authorList>
            <person name="Bechtel S."/>
            <person name="Rosenfelder H."/>
            <person name="Duda A."/>
            <person name="Schmidt C.P."/>
            <person name="Ernst U."/>
            <person name="Wellenreuther R."/>
            <person name="Mehrle A."/>
            <person name="Schuster C."/>
            <person name="Bahr A."/>
            <person name="Bloecker H."/>
            <person name="Heubner D."/>
            <person name="Hoerlein A."/>
            <person name="Michel G."/>
            <person name="Wedler H."/>
            <person name="Koehrer K."/>
            <person name="Ottenwaelder B."/>
            <person name="Poustka A."/>
            <person name="Wiemann S."/>
            <person name="Schupp I."/>
        </authorList>
    </citation>
    <scope>NUCLEOTIDE SEQUENCE [LARGE SCALE MRNA] OF 898-1083 (ISOFORM 1)</scope>
    <source>
        <tissue>Testis</tissue>
    </source>
</reference>
<reference key="6">
    <citation type="journal article" date="2000" name="J. Biol. Chem.">
        <title>Functional comparison of the K+-Cl- cotransporters KCC1 and KCC4.</title>
        <authorList>
            <person name="Mercado A."/>
            <person name="Song L."/>
            <person name="Vazquez N."/>
            <person name="Mount D.B."/>
            <person name="Gamba G."/>
        </authorList>
    </citation>
    <scope>FUNCTION</scope>
    <scope>TRANSPORTER ACTIVITY</scope>
    <scope>BIOPHYSICOCHEMICAL PROPERTIES</scope>
    <scope>SUBCELLULAR LOCATION</scope>
</reference>
<reference key="7">
    <citation type="journal article" date="2008" name="Proc. Natl. Acad. Sci. U.S.A.">
        <title>A quantitative atlas of mitotic phosphorylation.</title>
        <authorList>
            <person name="Dephoure N."/>
            <person name="Zhou C."/>
            <person name="Villen J."/>
            <person name="Beausoleil S.A."/>
            <person name="Bakalarski C.E."/>
            <person name="Elledge S.J."/>
            <person name="Gygi S.P."/>
        </authorList>
    </citation>
    <scope>IDENTIFICATION BY MASS SPECTROMETRY [LARGE SCALE ANALYSIS]</scope>
    <source>
        <tissue>Cervix carcinoma</tissue>
    </source>
</reference>
<reference key="8">
    <citation type="journal article" date="2009" name="Sci. Signal.">
        <title>Quantitative phosphoproteomic analysis of T cell receptor signaling reveals system-wide modulation of protein-protein interactions.</title>
        <authorList>
            <person name="Mayya V."/>
            <person name="Lundgren D.H."/>
            <person name="Hwang S.-I."/>
            <person name="Rezaul K."/>
            <person name="Wu L."/>
            <person name="Eng J.K."/>
            <person name="Rodionov V."/>
            <person name="Han D.K."/>
        </authorList>
    </citation>
    <scope>PHOSPHORYLATION [LARGE SCALE ANALYSIS] AT SER-50 AND SER-62</scope>
    <scope>IDENTIFICATION BY MASS SPECTROMETRY [LARGE SCALE ANALYSIS]</scope>
    <source>
        <tissue>Leukemic T-cell</tissue>
    </source>
</reference>
<reference key="9">
    <citation type="journal article" date="2011" name="Am. J. Physiol.">
        <title>Similar Effects of all WNK3 Variants upon SLC12 Cotransporters.</title>
        <authorList>
            <person name="Cruz-Rangel S."/>
            <person name="Melo Z."/>
            <person name="Vazquez N."/>
            <person name="Meade P."/>
            <person name="Bobadilla N.A."/>
            <person name="Pasantes-Morales H."/>
            <person name="Gamba G."/>
            <person name="Mercado A."/>
        </authorList>
    </citation>
    <scope>ACTIVITY REGULATION</scope>
</reference>
<reference key="10">
    <citation type="journal article" date="2014" name="J. Proteomics">
        <title>An enzyme assisted RP-RPLC approach for in-depth analysis of human liver phosphoproteome.</title>
        <authorList>
            <person name="Bian Y."/>
            <person name="Song C."/>
            <person name="Cheng K."/>
            <person name="Dong M."/>
            <person name="Wang F."/>
            <person name="Huang J."/>
            <person name="Sun D."/>
            <person name="Wang L."/>
            <person name="Ye M."/>
            <person name="Zou H."/>
        </authorList>
    </citation>
    <scope>PHOSPHORYLATION [LARGE SCALE ANALYSIS] AT THR-30</scope>
    <scope>IDENTIFICATION BY MASS SPECTROMETRY [LARGE SCALE ANALYSIS]</scope>
    <source>
        <tissue>Liver</tissue>
    </source>
</reference>
<reference evidence="14" key="11">
    <citation type="journal article" date="2020" name="Sci. Adv.">
        <title>Structures and an activation mechanism of human potassium-chloride cotransporters.</title>
        <authorList>
            <person name="Xie Y."/>
            <person name="Chang S."/>
            <person name="Zhao C."/>
            <person name="Wang F."/>
            <person name="Liu S."/>
            <person name="Wang J."/>
            <person name="Delpire E."/>
            <person name="Ye S."/>
            <person name="Guo J."/>
        </authorList>
    </citation>
    <scope>STRUCTURE BY ELECTRON MICROSCOPY (2.90 ANGSTROMS) OF 82-1079 OF ISOFORM 1 IN COMPLEX WITH POTASSIUM AND CHLORIDE</scope>
    <scope>SUBUNIT</scope>
    <scope>DISULFIDE BONDS</scope>
</reference>